<organism>
    <name type="scientific">Bacillus subtilis (strain 168)</name>
    <dbReference type="NCBI Taxonomy" id="224308"/>
    <lineage>
        <taxon>Bacteria</taxon>
        <taxon>Bacillati</taxon>
        <taxon>Bacillota</taxon>
        <taxon>Bacilli</taxon>
        <taxon>Bacillales</taxon>
        <taxon>Bacillaceae</taxon>
        <taxon>Bacillus</taxon>
    </lineage>
</organism>
<keyword id="KW-1185">Reference proteome</keyword>
<gene>
    <name type="primary">yhzC</name>
    <name type="ordered locus">BSU10410</name>
</gene>
<accession>O31594</accession>
<protein>
    <recommendedName>
        <fullName>Uncharacterized protein YhzC</fullName>
    </recommendedName>
</protein>
<dbReference type="EMBL" id="AL009126">
    <property type="protein sequence ID" value="CAB12881.1"/>
    <property type="molecule type" value="Genomic_DNA"/>
</dbReference>
<dbReference type="PIR" id="H69835">
    <property type="entry name" value="H69835"/>
</dbReference>
<dbReference type="RefSeq" id="NP_388922.1">
    <property type="nucleotide sequence ID" value="NC_000964.3"/>
</dbReference>
<dbReference type="RefSeq" id="WP_003233142.1">
    <property type="nucleotide sequence ID" value="NZ_OZ025638.1"/>
</dbReference>
<dbReference type="SMR" id="O31594"/>
<dbReference type="FunCoup" id="O31594">
    <property type="interactions" value="147"/>
</dbReference>
<dbReference type="STRING" id="224308.BSU10410"/>
<dbReference type="PaxDb" id="224308-BSU10410"/>
<dbReference type="EnsemblBacteria" id="CAB12881">
    <property type="protein sequence ID" value="CAB12881"/>
    <property type="gene ID" value="BSU_10410"/>
</dbReference>
<dbReference type="GeneID" id="939319"/>
<dbReference type="KEGG" id="bsu:BSU10410"/>
<dbReference type="PATRIC" id="fig|224308.179.peg.1119"/>
<dbReference type="eggNOG" id="ENOG5033N2I">
    <property type="taxonomic scope" value="Bacteria"/>
</dbReference>
<dbReference type="InParanoid" id="O31594"/>
<dbReference type="OrthoDB" id="2989967at2"/>
<dbReference type="BioCyc" id="BSUB:BSU10410-MONOMER"/>
<dbReference type="Proteomes" id="UP000001570">
    <property type="component" value="Chromosome"/>
</dbReference>
<dbReference type="Gene3D" id="4.10.810.10">
    <property type="entry name" value="Virus Scaffolding Protein, Chain A"/>
    <property type="match status" value="1"/>
</dbReference>
<dbReference type="InterPro" id="IPR014957">
    <property type="entry name" value="IDEAL_dom"/>
</dbReference>
<dbReference type="InterPro" id="IPR027393">
    <property type="entry name" value="Virus_scaffolding_prot_C"/>
</dbReference>
<dbReference type="Pfam" id="PF08858">
    <property type="entry name" value="IDEAL"/>
    <property type="match status" value="1"/>
</dbReference>
<dbReference type="SMART" id="SM00914">
    <property type="entry name" value="IDEAL"/>
    <property type="match status" value="1"/>
</dbReference>
<feature type="chain" id="PRO_0000049581" description="Uncharacterized protein YhzC">
    <location>
        <begin position="1"/>
        <end position="77"/>
    </location>
</feature>
<reference key="1">
    <citation type="journal article" date="1997" name="Nature">
        <title>The complete genome sequence of the Gram-positive bacterium Bacillus subtilis.</title>
        <authorList>
            <person name="Kunst F."/>
            <person name="Ogasawara N."/>
            <person name="Moszer I."/>
            <person name="Albertini A.M."/>
            <person name="Alloni G."/>
            <person name="Azevedo V."/>
            <person name="Bertero M.G."/>
            <person name="Bessieres P."/>
            <person name="Bolotin A."/>
            <person name="Borchert S."/>
            <person name="Borriss R."/>
            <person name="Boursier L."/>
            <person name="Brans A."/>
            <person name="Braun M."/>
            <person name="Brignell S.C."/>
            <person name="Bron S."/>
            <person name="Brouillet S."/>
            <person name="Bruschi C.V."/>
            <person name="Caldwell B."/>
            <person name="Capuano V."/>
            <person name="Carter N.M."/>
            <person name="Choi S.-K."/>
            <person name="Codani J.-J."/>
            <person name="Connerton I.F."/>
            <person name="Cummings N.J."/>
            <person name="Daniel R.A."/>
            <person name="Denizot F."/>
            <person name="Devine K.M."/>
            <person name="Duesterhoeft A."/>
            <person name="Ehrlich S.D."/>
            <person name="Emmerson P.T."/>
            <person name="Entian K.-D."/>
            <person name="Errington J."/>
            <person name="Fabret C."/>
            <person name="Ferrari E."/>
            <person name="Foulger D."/>
            <person name="Fritz C."/>
            <person name="Fujita M."/>
            <person name="Fujita Y."/>
            <person name="Fuma S."/>
            <person name="Galizzi A."/>
            <person name="Galleron N."/>
            <person name="Ghim S.-Y."/>
            <person name="Glaser P."/>
            <person name="Goffeau A."/>
            <person name="Golightly E.J."/>
            <person name="Grandi G."/>
            <person name="Guiseppi G."/>
            <person name="Guy B.J."/>
            <person name="Haga K."/>
            <person name="Haiech J."/>
            <person name="Harwood C.R."/>
            <person name="Henaut A."/>
            <person name="Hilbert H."/>
            <person name="Holsappel S."/>
            <person name="Hosono S."/>
            <person name="Hullo M.-F."/>
            <person name="Itaya M."/>
            <person name="Jones L.-M."/>
            <person name="Joris B."/>
            <person name="Karamata D."/>
            <person name="Kasahara Y."/>
            <person name="Klaerr-Blanchard M."/>
            <person name="Klein C."/>
            <person name="Kobayashi Y."/>
            <person name="Koetter P."/>
            <person name="Koningstein G."/>
            <person name="Krogh S."/>
            <person name="Kumano M."/>
            <person name="Kurita K."/>
            <person name="Lapidus A."/>
            <person name="Lardinois S."/>
            <person name="Lauber J."/>
            <person name="Lazarevic V."/>
            <person name="Lee S.-M."/>
            <person name="Levine A."/>
            <person name="Liu H."/>
            <person name="Masuda S."/>
            <person name="Mauel C."/>
            <person name="Medigue C."/>
            <person name="Medina N."/>
            <person name="Mellado R.P."/>
            <person name="Mizuno M."/>
            <person name="Moestl D."/>
            <person name="Nakai S."/>
            <person name="Noback M."/>
            <person name="Noone D."/>
            <person name="O'Reilly M."/>
            <person name="Ogawa K."/>
            <person name="Ogiwara A."/>
            <person name="Oudega B."/>
            <person name="Park S.-H."/>
            <person name="Parro V."/>
            <person name="Pohl T.M."/>
            <person name="Portetelle D."/>
            <person name="Porwollik S."/>
            <person name="Prescott A.M."/>
            <person name="Presecan E."/>
            <person name="Pujic P."/>
            <person name="Purnelle B."/>
            <person name="Rapoport G."/>
            <person name="Rey M."/>
            <person name="Reynolds S."/>
            <person name="Rieger M."/>
            <person name="Rivolta C."/>
            <person name="Rocha E."/>
            <person name="Roche B."/>
            <person name="Rose M."/>
            <person name="Sadaie Y."/>
            <person name="Sato T."/>
            <person name="Scanlan E."/>
            <person name="Schleich S."/>
            <person name="Schroeter R."/>
            <person name="Scoffone F."/>
            <person name="Sekiguchi J."/>
            <person name="Sekowska A."/>
            <person name="Seror S.J."/>
            <person name="Serror P."/>
            <person name="Shin B.-S."/>
            <person name="Soldo B."/>
            <person name="Sorokin A."/>
            <person name="Tacconi E."/>
            <person name="Takagi T."/>
            <person name="Takahashi H."/>
            <person name="Takemaru K."/>
            <person name="Takeuchi M."/>
            <person name="Tamakoshi A."/>
            <person name="Tanaka T."/>
            <person name="Terpstra P."/>
            <person name="Tognoni A."/>
            <person name="Tosato V."/>
            <person name="Uchiyama S."/>
            <person name="Vandenbol M."/>
            <person name="Vannier F."/>
            <person name="Vassarotti A."/>
            <person name="Viari A."/>
            <person name="Wambutt R."/>
            <person name="Wedler E."/>
            <person name="Wedler H."/>
            <person name="Weitzenegger T."/>
            <person name="Winters P."/>
            <person name="Wipat A."/>
            <person name="Yamamoto H."/>
            <person name="Yamane K."/>
            <person name="Yasumoto K."/>
            <person name="Yata K."/>
            <person name="Yoshida K."/>
            <person name="Yoshikawa H.-F."/>
            <person name="Zumstein E."/>
            <person name="Yoshikawa H."/>
            <person name="Danchin A."/>
        </authorList>
    </citation>
    <scope>NUCLEOTIDE SEQUENCE [LARGE SCALE GENOMIC DNA]</scope>
    <source>
        <strain>168</strain>
    </source>
</reference>
<name>YHZC_BACSU</name>
<sequence>MKEKKSYTELMKSRNTQKTKEFDVTMTDIYIQMVLDESLYNRRLAMLTDQINKALDEKDKDAFLTLSKEYAALKQSE</sequence>
<proteinExistence type="predicted"/>